<accession>Q2TAK8</accession>
<accession>A1L489</accession>
<accession>B5ME02</accession>
<accession>B7ZLY8</accession>
<accession>J3KQD6</accession>
<accession>Q13109</accession>
<accession>Q5XKB9</accession>
<accession>Q8N2I4</accession>
<accession>Q96A67</accession>
<reference key="1">
    <citation type="journal article" date="2004" name="Nature">
        <title>The DNA sequence and biology of human chromosome 19.</title>
        <authorList>
            <person name="Grimwood J."/>
            <person name="Gordon L.A."/>
            <person name="Olsen A.S."/>
            <person name="Terry A."/>
            <person name="Schmutz J."/>
            <person name="Lamerdin J.E."/>
            <person name="Hellsten U."/>
            <person name="Goodstein D."/>
            <person name="Couronne O."/>
            <person name="Tran-Gyamfi M."/>
            <person name="Aerts A."/>
            <person name="Altherr M."/>
            <person name="Ashworth L."/>
            <person name="Bajorek E."/>
            <person name="Black S."/>
            <person name="Branscomb E."/>
            <person name="Caenepeel S."/>
            <person name="Carrano A.V."/>
            <person name="Caoile C."/>
            <person name="Chan Y.M."/>
            <person name="Christensen M."/>
            <person name="Cleland C.A."/>
            <person name="Copeland A."/>
            <person name="Dalin E."/>
            <person name="Dehal P."/>
            <person name="Denys M."/>
            <person name="Detter J.C."/>
            <person name="Escobar J."/>
            <person name="Flowers D."/>
            <person name="Fotopulos D."/>
            <person name="Garcia C."/>
            <person name="Georgescu A.M."/>
            <person name="Glavina T."/>
            <person name="Gomez M."/>
            <person name="Gonzales E."/>
            <person name="Groza M."/>
            <person name="Hammon N."/>
            <person name="Hawkins T."/>
            <person name="Haydu L."/>
            <person name="Ho I."/>
            <person name="Huang W."/>
            <person name="Israni S."/>
            <person name="Jett J."/>
            <person name="Kadner K."/>
            <person name="Kimball H."/>
            <person name="Kobayashi A."/>
            <person name="Larionov V."/>
            <person name="Leem S.-H."/>
            <person name="Lopez F."/>
            <person name="Lou Y."/>
            <person name="Lowry S."/>
            <person name="Malfatti S."/>
            <person name="Martinez D."/>
            <person name="McCready P.M."/>
            <person name="Medina C."/>
            <person name="Morgan J."/>
            <person name="Nelson K."/>
            <person name="Nolan M."/>
            <person name="Ovcharenko I."/>
            <person name="Pitluck S."/>
            <person name="Pollard M."/>
            <person name="Popkie A.P."/>
            <person name="Predki P."/>
            <person name="Quan G."/>
            <person name="Ramirez L."/>
            <person name="Rash S."/>
            <person name="Retterer J."/>
            <person name="Rodriguez A."/>
            <person name="Rogers S."/>
            <person name="Salamov A."/>
            <person name="Salazar A."/>
            <person name="She X."/>
            <person name="Smith D."/>
            <person name="Slezak T."/>
            <person name="Solovyev V."/>
            <person name="Thayer N."/>
            <person name="Tice H."/>
            <person name="Tsai M."/>
            <person name="Ustaszewska A."/>
            <person name="Vo N."/>
            <person name="Wagner M."/>
            <person name="Wheeler J."/>
            <person name="Wu K."/>
            <person name="Xie G."/>
            <person name="Yang J."/>
            <person name="Dubchak I."/>
            <person name="Furey T.S."/>
            <person name="DeJong P."/>
            <person name="Dickson M."/>
            <person name="Gordon D."/>
            <person name="Eichler E.E."/>
            <person name="Pennacchio L.A."/>
            <person name="Richardson P."/>
            <person name="Stubbs L."/>
            <person name="Rokhsar D.S."/>
            <person name="Myers R.M."/>
            <person name="Rubin E.M."/>
            <person name="Lucas S.M."/>
        </authorList>
    </citation>
    <scope>NUCLEOTIDE SEQUENCE [LARGE SCALE GENOMIC DNA]</scope>
</reference>
<reference key="2">
    <citation type="journal article" date="2004" name="Genome Res.">
        <title>The status, quality, and expansion of the NIH full-length cDNA project: the Mammalian Gene Collection (MGC).</title>
        <authorList>
            <consortium name="The MGC Project Team"/>
        </authorList>
    </citation>
    <scope>NUCLEOTIDE SEQUENCE [LARGE SCALE MRNA] (ISOFORMS 1; 2 AND 3)</scope>
    <scope>VARIANT ARG-219</scope>
    <source>
        <tissue>Brain</tissue>
        <tissue>PNS</tissue>
    </source>
</reference>
<reference key="3">
    <citation type="journal article" date="1995" name="Proc. Natl. Acad. Sci. U.S.A.">
        <title>A mutated intron sequence codes for an antigenic peptide recognized by cytolytic T lymphocytes on a human melanoma.</title>
        <authorList>
            <person name="Coulie P.G."/>
            <person name="Lehmann F."/>
            <person name="Lethe B."/>
            <person name="Herman J."/>
            <person name="Lurquin C."/>
            <person name="Andrawiss M."/>
            <person name="Boon T."/>
        </authorList>
    </citation>
    <scope>NUCLEOTIDE SEQUENCE [MRNA] OF 1-411</scope>
    <scope>VARIANT ARG-219</scope>
    <source>
        <tissue>Melanoma</tissue>
    </source>
</reference>
<reference key="4">
    <citation type="journal article" date="2004" name="Nat. Genet.">
        <title>Complete sequencing and characterization of 21,243 full-length human cDNAs.</title>
        <authorList>
            <person name="Ota T."/>
            <person name="Suzuki Y."/>
            <person name="Nishikawa T."/>
            <person name="Otsuki T."/>
            <person name="Sugiyama T."/>
            <person name="Irie R."/>
            <person name="Wakamatsu A."/>
            <person name="Hayashi K."/>
            <person name="Sato H."/>
            <person name="Nagai K."/>
            <person name="Kimura K."/>
            <person name="Makita H."/>
            <person name="Sekine M."/>
            <person name="Obayashi M."/>
            <person name="Nishi T."/>
            <person name="Shibahara T."/>
            <person name="Tanaka T."/>
            <person name="Ishii S."/>
            <person name="Yamamoto J."/>
            <person name="Saito K."/>
            <person name="Kawai Y."/>
            <person name="Isono Y."/>
            <person name="Nakamura Y."/>
            <person name="Nagahari K."/>
            <person name="Murakami K."/>
            <person name="Yasuda T."/>
            <person name="Iwayanagi T."/>
            <person name="Wagatsuma M."/>
            <person name="Shiratori A."/>
            <person name="Sudo H."/>
            <person name="Hosoiri T."/>
            <person name="Kaku Y."/>
            <person name="Kodaira H."/>
            <person name="Kondo H."/>
            <person name="Sugawara M."/>
            <person name="Takahashi M."/>
            <person name="Kanda K."/>
            <person name="Yokoi T."/>
            <person name="Furuya T."/>
            <person name="Kikkawa E."/>
            <person name="Omura Y."/>
            <person name="Abe K."/>
            <person name="Kamihara K."/>
            <person name="Katsuta N."/>
            <person name="Sato K."/>
            <person name="Tanikawa M."/>
            <person name="Yamazaki M."/>
            <person name="Ninomiya K."/>
            <person name="Ishibashi T."/>
            <person name="Yamashita H."/>
            <person name="Murakawa K."/>
            <person name="Fujimori K."/>
            <person name="Tanai H."/>
            <person name="Kimata M."/>
            <person name="Watanabe M."/>
            <person name="Hiraoka S."/>
            <person name="Chiba Y."/>
            <person name="Ishida S."/>
            <person name="Ono Y."/>
            <person name="Takiguchi S."/>
            <person name="Watanabe S."/>
            <person name="Yosida M."/>
            <person name="Hotuta T."/>
            <person name="Kusano J."/>
            <person name="Kanehori K."/>
            <person name="Takahashi-Fujii A."/>
            <person name="Hara H."/>
            <person name="Tanase T.-O."/>
            <person name="Nomura Y."/>
            <person name="Togiya S."/>
            <person name="Komai F."/>
            <person name="Hara R."/>
            <person name="Takeuchi K."/>
            <person name="Arita M."/>
            <person name="Imose N."/>
            <person name="Musashino K."/>
            <person name="Yuuki H."/>
            <person name="Oshima A."/>
            <person name="Sasaki N."/>
            <person name="Aotsuka S."/>
            <person name="Yoshikawa Y."/>
            <person name="Matsunawa H."/>
            <person name="Ichihara T."/>
            <person name="Shiohata N."/>
            <person name="Sano S."/>
            <person name="Moriya S."/>
            <person name="Momiyama H."/>
            <person name="Satoh N."/>
            <person name="Takami S."/>
            <person name="Terashima Y."/>
            <person name="Suzuki O."/>
            <person name="Nakagawa S."/>
            <person name="Senoh A."/>
            <person name="Mizoguchi H."/>
            <person name="Goto Y."/>
            <person name="Shimizu F."/>
            <person name="Wakebe H."/>
            <person name="Hishigaki H."/>
            <person name="Watanabe T."/>
            <person name="Sugiyama A."/>
            <person name="Takemoto M."/>
            <person name="Kawakami B."/>
            <person name="Yamazaki M."/>
            <person name="Watanabe K."/>
            <person name="Kumagai A."/>
            <person name="Itakura S."/>
            <person name="Fukuzumi Y."/>
            <person name="Fujimori Y."/>
            <person name="Komiyama M."/>
            <person name="Tashiro H."/>
            <person name="Tanigami A."/>
            <person name="Fujiwara T."/>
            <person name="Ono T."/>
            <person name="Yamada K."/>
            <person name="Fujii Y."/>
            <person name="Ozaki K."/>
            <person name="Hirao M."/>
            <person name="Ohmori Y."/>
            <person name="Kawabata A."/>
            <person name="Hikiji T."/>
            <person name="Kobatake N."/>
            <person name="Inagaki H."/>
            <person name="Ikema Y."/>
            <person name="Okamoto S."/>
            <person name="Okitani R."/>
            <person name="Kawakami T."/>
            <person name="Noguchi S."/>
            <person name="Itoh T."/>
            <person name="Shigeta K."/>
            <person name="Senba T."/>
            <person name="Matsumura K."/>
            <person name="Nakajima Y."/>
            <person name="Mizuno T."/>
            <person name="Morinaga M."/>
            <person name="Sasaki M."/>
            <person name="Togashi T."/>
            <person name="Oyama M."/>
            <person name="Hata H."/>
            <person name="Watanabe M."/>
            <person name="Komatsu T."/>
            <person name="Mizushima-Sugano J."/>
            <person name="Satoh T."/>
            <person name="Shirai Y."/>
            <person name="Takahashi Y."/>
            <person name="Nakagawa K."/>
            <person name="Okumura K."/>
            <person name="Nagase T."/>
            <person name="Nomura N."/>
            <person name="Kikuchi H."/>
            <person name="Masuho Y."/>
            <person name="Yamashita R."/>
            <person name="Nakai K."/>
            <person name="Yada T."/>
            <person name="Nakamura Y."/>
            <person name="Ohara O."/>
            <person name="Isogai T."/>
            <person name="Sugano S."/>
        </authorList>
    </citation>
    <scope>NUCLEOTIDE SEQUENCE [LARGE SCALE MRNA] OF 421-710 (ISOFORMS 1/2)</scope>
    <source>
        <tissue>Placenta</tissue>
        <tissue>Thyroid</tissue>
    </source>
</reference>
<reference key="5">
    <citation type="journal article" date="2008" name="Proc. Natl. Acad. Sci. U.S.A.">
        <title>A quantitative atlas of mitotic phosphorylation.</title>
        <authorList>
            <person name="Dephoure N."/>
            <person name="Zhou C."/>
            <person name="Villen J."/>
            <person name="Beausoleil S.A."/>
            <person name="Bakalarski C.E."/>
            <person name="Elledge S.J."/>
            <person name="Gygi S.P."/>
        </authorList>
    </citation>
    <scope>IDENTIFICATION BY MASS SPECTROMETRY [LARGE SCALE ANALYSIS]</scope>
    <source>
        <tissue>Cervix carcinoma</tissue>
    </source>
</reference>
<reference key="6">
    <citation type="journal article" date="2010" name="Mol. Cell">
        <title>Regulation of chromatin architecture by the PWWP domain-containing DNA damage-responsive factor EXPAND1/MUM1.</title>
        <authorList>
            <person name="Huen M.S."/>
            <person name="Huang J."/>
            <person name="Leung J.W."/>
            <person name="Sy S.M."/>
            <person name="Leung K.M."/>
            <person name="Ching Y.P."/>
            <person name="Tsao S.W."/>
            <person name="Chen J."/>
        </authorList>
    </citation>
    <scope>FUNCTION</scope>
    <scope>IDENTIFICATION BY MASS SPECTROMETRY</scope>
    <scope>SUBCELLULAR LOCATION</scope>
    <scope>DOMAIN PWWP</scope>
    <scope>INTERACTION WITH TP53BP1 AND NUCLEOSOMES</scope>
</reference>
<reference key="7">
    <citation type="journal article" date="2011" name="PLoS ONE">
        <title>Structural and histone binding ability characterizations of human PWWP domains.</title>
        <authorList>
            <person name="Wu H."/>
            <person name="Zeng H."/>
            <person name="Lam R."/>
            <person name="Tempel W."/>
            <person name="Amaya M.F."/>
            <person name="Xu C."/>
            <person name="Dombrovski L."/>
            <person name="Qiu W."/>
            <person name="Wang Y."/>
            <person name="Min J."/>
        </authorList>
    </citation>
    <scope>X-RAY CRYSTALLOGRAPHY (2.82 ANGSTROMS) OF 405-538</scope>
    <scope>INTERACTION WITH TRIMETHYLATED HISTONE H3</scope>
</reference>
<proteinExistence type="evidence at protein level"/>
<feature type="chain" id="PRO_0000295046" description="PWWP domain-containing DNA repair factor 3A">
    <location>
        <begin position="1"/>
        <end position="710"/>
    </location>
</feature>
<feature type="domain" description="PWWP">
    <location>
        <begin position="411"/>
        <end position="472"/>
    </location>
</feature>
<feature type="region of interest" description="Disordered" evidence="3">
    <location>
        <begin position="106"/>
        <end position="160"/>
    </location>
</feature>
<feature type="region of interest" description="Disordered" evidence="3">
    <location>
        <begin position="177"/>
        <end position="204"/>
    </location>
</feature>
<feature type="region of interest" description="Disordered" evidence="3">
    <location>
        <begin position="230"/>
        <end position="398"/>
    </location>
</feature>
<feature type="compositionally biased region" description="Basic and acidic residues" evidence="3">
    <location>
        <begin position="114"/>
        <end position="125"/>
    </location>
</feature>
<feature type="compositionally biased region" description="Low complexity" evidence="3">
    <location>
        <begin position="128"/>
        <end position="137"/>
    </location>
</feature>
<feature type="compositionally biased region" description="Low complexity" evidence="3">
    <location>
        <begin position="288"/>
        <end position="297"/>
    </location>
</feature>
<feature type="compositionally biased region" description="Polar residues" evidence="3">
    <location>
        <begin position="375"/>
        <end position="385"/>
    </location>
</feature>
<feature type="modified residue" description="Phosphoserine" evidence="1">
    <location>
        <position position="161"/>
    </location>
</feature>
<feature type="modified residue" description="Phosphoserine" evidence="2">
    <location>
        <position position="374"/>
    </location>
</feature>
<feature type="modified residue" description="Phosphoserine" evidence="2">
    <location>
        <position position="375"/>
    </location>
</feature>
<feature type="splice variant" id="VSP_026684" description="In isoform 2." evidence="8">
    <location>
        <begin position="1"/>
        <end position="68"/>
    </location>
</feature>
<feature type="splice variant" id="VSP_026685" description="In isoform 2." evidence="8">
    <original>SSL</original>
    <variation>MVS</variation>
    <location>
        <begin position="69"/>
        <end position="71"/>
    </location>
</feature>
<feature type="splice variant" id="VSP_053986" description="In isoform 3." evidence="8">
    <original>AIICAISAVDEVDYKTAEEKYIKGPSLSYREKEIFDNQLLEERNRRRR</original>
    <variation>CWEMRVRALDPVRRRSRLLDPCAEMELLRSCQHQGVRTPSLLRAHRCFPASVGHHLCDLCGGRGGLQDG</variation>
    <location>
        <begin position="663"/>
        <end position="710"/>
    </location>
</feature>
<feature type="sequence variant" id="VAR_033195" description="In dbSNP:rs3826942." evidence="4 7">
    <original>G</original>
    <variation>R</variation>
    <location>
        <position position="219"/>
    </location>
</feature>
<feature type="sequence variant" id="VAR_033196" description="In dbSNP:rs34502536.">
    <original>G</original>
    <variation>A</variation>
    <location>
        <position position="551"/>
    </location>
</feature>
<feature type="sequence conflict" description="In Ref. 4; BAB55357." evidence="10" ref="4">
    <original>K</original>
    <variation>R</variation>
    <location>
        <position position="532"/>
    </location>
</feature>
<feature type="strand" evidence="13">
    <location>
        <begin position="414"/>
        <end position="417"/>
    </location>
</feature>
<feature type="strand" evidence="13">
    <location>
        <begin position="425"/>
        <end position="433"/>
    </location>
</feature>
<feature type="helix" evidence="13">
    <location>
        <begin position="434"/>
        <end position="436"/>
    </location>
</feature>
<feature type="strand" evidence="13">
    <location>
        <begin position="438"/>
        <end position="443"/>
    </location>
</feature>
<feature type="strand" evidence="13">
    <location>
        <begin position="455"/>
        <end position="458"/>
    </location>
</feature>
<feature type="helix" evidence="13">
    <location>
        <begin position="459"/>
        <end position="461"/>
    </location>
</feature>
<feature type="helix" evidence="13">
    <location>
        <begin position="470"/>
        <end position="477"/>
    </location>
</feature>
<feature type="turn" evidence="13">
    <location>
        <begin position="478"/>
        <end position="480"/>
    </location>
</feature>
<feature type="helix" evidence="13">
    <location>
        <begin position="482"/>
        <end position="500"/>
    </location>
</feature>
<feature type="helix" evidence="13">
    <location>
        <begin position="508"/>
        <end position="513"/>
    </location>
</feature>
<feature type="helix" evidence="13">
    <location>
        <begin position="518"/>
        <end position="527"/>
    </location>
</feature>
<dbReference type="EMBL" id="U20897">
    <property type="protein sequence ID" value="AAC50240.1"/>
    <property type="status" value="ALT_FRAME"/>
    <property type="molecule type" value="mRNA"/>
</dbReference>
<dbReference type="EMBL" id="AC004258">
    <property type="status" value="NOT_ANNOTATED_CDS"/>
    <property type="molecule type" value="Genomic_DNA"/>
</dbReference>
<dbReference type="EMBL" id="AC004623">
    <property type="status" value="NOT_ANNOTATED_CDS"/>
    <property type="molecule type" value="Genomic_DNA"/>
</dbReference>
<dbReference type="EMBL" id="AC005329">
    <property type="status" value="NOT_ANNOTATED_CDS"/>
    <property type="molecule type" value="Genomic_DNA"/>
</dbReference>
<dbReference type="EMBL" id="AC005330">
    <property type="status" value="NOT_ANNOTATED_CDS"/>
    <property type="molecule type" value="Genomic_DNA"/>
</dbReference>
<dbReference type="EMBL" id="BC008098">
    <property type="protein sequence ID" value="AAH08098.1"/>
    <property type="status" value="ALT_INIT"/>
    <property type="molecule type" value="mRNA"/>
</dbReference>
<dbReference type="EMBL" id="BC082987">
    <property type="protein sequence ID" value="AAH82987.1"/>
    <property type="molecule type" value="mRNA"/>
</dbReference>
<dbReference type="EMBL" id="BC110874">
    <property type="protein sequence ID" value="AAI10875.1"/>
    <property type="status" value="ALT_INIT"/>
    <property type="molecule type" value="mRNA"/>
</dbReference>
<dbReference type="EMBL" id="BC130443">
    <property type="protein sequence ID" value="AAI30444.1"/>
    <property type="molecule type" value="mRNA"/>
</dbReference>
<dbReference type="EMBL" id="BC144138">
    <property type="protein sequence ID" value="AAI44139.1"/>
    <property type="status" value="ALT_INIT"/>
    <property type="molecule type" value="mRNA"/>
</dbReference>
<dbReference type="EMBL" id="AK027774">
    <property type="protein sequence ID" value="BAB55357.1"/>
    <property type="status" value="ALT_INIT"/>
    <property type="molecule type" value="mRNA"/>
</dbReference>
<dbReference type="EMBL" id="AK075241">
    <property type="protein sequence ID" value="BAC11493.1"/>
    <property type="status" value="ALT_INIT"/>
    <property type="molecule type" value="mRNA"/>
</dbReference>
<dbReference type="CCDS" id="CCDS12062.2">
    <molecule id="Q2TAK8-1"/>
</dbReference>
<dbReference type="PIR" id="I38945">
    <property type="entry name" value="I38946"/>
</dbReference>
<dbReference type="RefSeq" id="NP_001356718.1">
    <molecule id="Q2TAK8-1"/>
    <property type="nucleotide sequence ID" value="NM_001369789.1"/>
</dbReference>
<dbReference type="RefSeq" id="NP_001356721.1">
    <molecule id="Q2TAK8-2"/>
    <property type="nucleotide sequence ID" value="NM_001369792.1"/>
</dbReference>
<dbReference type="RefSeq" id="NP_116242.2">
    <molecule id="Q2TAK8-1"/>
    <property type="nucleotide sequence ID" value="NM_032853.3"/>
</dbReference>
<dbReference type="RefSeq" id="XP_011526687.1">
    <property type="nucleotide sequence ID" value="XM_011528385.2"/>
</dbReference>
<dbReference type="PDB" id="3PMI">
    <property type="method" value="X-ray"/>
    <property type="resolution" value="2.82 A"/>
    <property type="chains" value="A/B/C/D=405-538"/>
</dbReference>
<dbReference type="PDBsum" id="3PMI"/>
<dbReference type="SMR" id="Q2TAK8"/>
<dbReference type="BioGRID" id="124373">
    <property type="interactions" value="35"/>
</dbReference>
<dbReference type="FunCoup" id="Q2TAK8">
    <property type="interactions" value="2635"/>
</dbReference>
<dbReference type="IntAct" id="Q2TAK8">
    <property type="interactions" value="20"/>
</dbReference>
<dbReference type="STRING" id="9606.ENSP00000498656"/>
<dbReference type="GlyGen" id="Q2TAK8">
    <property type="glycosylation" value="1 site, 1 O-linked glycan (1 site)"/>
</dbReference>
<dbReference type="iPTMnet" id="Q2TAK8"/>
<dbReference type="PhosphoSitePlus" id="Q2TAK8"/>
<dbReference type="BioMuta" id="MUM1"/>
<dbReference type="DMDM" id="259016340"/>
<dbReference type="jPOST" id="Q2TAK8"/>
<dbReference type="MassIVE" id="Q2TAK8"/>
<dbReference type="PaxDb" id="9606-ENSP00000467083"/>
<dbReference type="PeptideAtlas" id="Q2TAK8"/>
<dbReference type="ProteomicsDB" id="61463">
    <molecule id="Q2TAK8-1"/>
</dbReference>
<dbReference type="ProteomicsDB" id="61464">
    <molecule id="Q2TAK8-2"/>
</dbReference>
<dbReference type="Pumba" id="Q2TAK8"/>
<dbReference type="Antibodypedia" id="10456">
    <property type="antibodies" value="278 antibodies from 36 providers"/>
</dbReference>
<dbReference type="DNASU" id="84939"/>
<dbReference type="Ensembl" id="ENST00000415183.7">
    <molecule id="Q2TAK8-3"/>
    <property type="protein sequence ID" value="ENSP00000394925.3"/>
    <property type="gene ID" value="ENSG00000160953.17"/>
</dbReference>
<dbReference type="Ensembl" id="ENST00000591337.7">
    <molecule id="Q2TAK8-1"/>
    <property type="protein sequence ID" value="ENSP00000467287.4"/>
    <property type="gene ID" value="ENSG00000160953.17"/>
</dbReference>
<dbReference type="Ensembl" id="ENST00000591806.6">
    <molecule id="Q2TAK8-1"/>
    <property type="protein sequence ID" value="ENSP00000467083.2"/>
    <property type="gene ID" value="ENSG00000160953.17"/>
</dbReference>
<dbReference type="GeneID" id="84939"/>
<dbReference type="KEGG" id="hsa:84939"/>
<dbReference type="MANE-Select" id="ENST00000591337.7">
    <property type="protein sequence ID" value="ENSP00000467287.4"/>
    <property type="RefSeq nucleotide sequence ID" value="NM_001369789.1"/>
    <property type="RefSeq protein sequence ID" value="NP_001356718.1"/>
</dbReference>
<dbReference type="UCSC" id="uc060qzk.1">
    <molecule id="Q2TAK8-1"/>
    <property type="organism name" value="human"/>
</dbReference>
<dbReference type="AGR" id="HGNC:29641"/>
<dbReference type="CTD" id="84939"/>
<dbReference type="DisGeNET" id="84939"/>
<dbReference type="GeneCards" id="PWWP3A"/>
<dbReference type="HGNC" id="HGNC:29641">
    <property type="gene designation" value="PWWP3A"/>
</dbReference>
<dbReference type="HPA" id="ENSG00000160953">
    <property type="expression patterns" value="Low tissue specificity"/>
</dbReference>
<dbReference type="neXtProt" id="NX_Q2TAK8"/>
<dbReference type="OpenTargets" id="ENSG00000160953"/>
<dbReference type="PharmGKB" id="PA164742142"/>
<dbReference type="VEuPathDB" id="HostDB:ENSG00000160953"/>
<dbReference type="eggNOG" id="ENOG502QPRU">
    <property type="taxonomic scope" value="Eukaryota"/>
</dbReference>
<dbReference type="GeneTree" id="ENSGT00390000001700"/>
<dbReference type="InParanoid" id="Q2TAK8"/>
<dbReference type="OMA" id="PPWAHRC"/>
<dbReference type="OrthoDB" id="10013064at2759"/>
<dbReference type="PAN-GO" id="Q2TAK8">
    <property type="GO annotations" value="5 GO annotations based on evolutionary models"/>
</dbReference>
<dbReference type="PhylomeDB" id="Q2TAK8"/>
<dbReference type="PathwayCommons" id="Q2TAK8"/>
<dbReference type="SignaLink" id="Q2TAK8"/>
<dbReference type="BioGRID-ORCS" id="84939">
    <property type="hits" value="19 hits in 1153 CRISPR screens"/>
</dbReference>
<dbReference type="ChiTaRS" id="MUM1">
    <property type="organism name" value="human"/>
</dbReference>
<dbReference type="EvolutionaryTrace" id="Q2TAK8"/>
<dbReference type="GenomeRNAi" id="84939"/>
<dbReference type="Pharos" id="Q2TAK8">
    <property type="development level" value="Tbio"/>
</dbReference>
<dbReference type="PRO" id="PR:Q2TAK8"/>
<dbReference type="Proteomes" id="UP000005640">
    <property type="component" value="Chromosome 19"/>
</dbReference>
<dbReference type="RNAct" id="Q2TAK8">
    <property type="molecule type" value="protein"/>
</dbReference>
<dbReference type="Bgee" id="ENSG00000160953">
    <property type="expression patterns" value="Expressed in right hemisphere of cerebellum and 185 other cell types or tissues"/>
</dbReference>
<dbReference type="ExpressionAtlas" id="Q2TAK8">
    <property type="expression patterns" value="baseline and differential"/>
</dbReference>
<dbReference type="GO" id="GO:0005829">
    <property type="term" value="C:cytosol"/>
    <property type="evidence" value="ECO:0000314"/>
    <property type="project" value="HPA"/>
</dbReference>
<dbReference type="GO" id="GO:0005654">
    <property type="term" value="C:nucleoplasm"/>
    <property type="evidence" value="ECO:0000314"/>
    <property type="project" value="HPA"/>
</dbReference>
<dbReference type="GO" id="GO:0005634">
    <property type="term" value="C:nucleus"/>
    <property type="evidence" value="ECO:0000314"/>
    <property type="project" value="UniProtKB"/>
</dbReference>
<dbReference type="GO" id="GO:0031491">
    <property type="term" value="F:nucleosome binding"/>
    <property type="evidence" value="ECO:0000314"/>
    <property type="project" value="UniProtKB"/>
</dbReference>
<dbReference type="GO" id="GO:0006325">
    <property type="term" value="P:chromatin organization"/>
    <property type="evidence" value="ECO:0000315"/>
    <property type="project" value="UniProtKB"/>
</dbReference>
<dbReference type="GO" id="GO:0006281">
    <property type="term" value="P:DNA repair"/>
    <property type="evidence" value="ECO:0000315"/>
    <property type="project" value="UniProtKB"/>
</dbReference>
<dbReference type="CDD" id="cd06080">
    <property type="entry name" value="PWWP_MUM1-like"/>
    <property type="match status" value="1"/>
</dbReference>
<dbReference type="FunFam" id="2.30.30.140:FF:000063">
    <property type="entry name" value="PWWP domain-containing DNA repair factor 3A"/>
    <property type="match status" value="1"/>
</dbReference>
<dbReference type="Gene3D" id="2.30.30.140">
    <property type="match status" value="1"/>
</dbReference>
<dbReference type="Gene3D" id="6.10.300.20">
    <property type="match status" value="1"/>
</dbReference>
<dbReference type="InterPro" id="IPR035504">
    <property type="entry name" value="MUM1-like_PWWP"/>
</dbReference>
<dbReference type="InterPro" id="IPR040263">
    <property type="entry name" value="PWP3A_3B_4"/>
</dbReference>
<dbReference type="InterPro" id="IPR048795">
    <property type="entry name" value="PWP3A_3B_4_C"/>
</dbReference>
<dbReference type="InterPro" id="IPR048765">
    <property type="entry name" value="PWP3A_3B_4_N"/>
</dbReference>
<dbReference type="PANTHER" id="PTHR31333">
    <property type="entry name" value="PWWP DOMAIN-CONTAINING DNA REPAIR FACTOR 3 FAMILY MEMBER"/>
    <property type="match status" value="1"/>
</dbReference>
<dbReference type="PANTHER" id="PTHR31333:SF4">
    <property type="entry name" value="PWWP DOMAIN-CONTAINING DNA REPAIR FACTOR 3A"/>
    <property type="match status" value="1"/>
</dbReference>
<dbReference type="Pfam" id="PF20884">
    <property type="entry name" value="MUM1-like_PWWP"/>
    <property type="match status" value="1"/>
</dbReference>
<dbReference type="Pfam" id="PF20886">
    <property type="entry name" value="PWP3A-B_C"/>
    <property type="match status" value="1"/>
</dbReference>
<dbReference type="Pfam" id="PF20887">
    <property type="entry name" value="PWP3A-B_N"/>
    <property type="match status" value="1"/>
</dbReference>
<dbReference type="SUPFAM" id="SSF63748">
    <property type="entry name" value="Tudor/PWWP/MBT"/>
    <property type="match status" value="1"/>
</dbReference>
<keyword id="KW-0002">3D-structure</keyword>
<keyword id="KW-0025">Alternative splicing</keyword>
<keyword id="KW-0227">DNA damage</keyword>
<keyword id="KW-0234">DNA repair</keyword>
<keyword id="KW-0539">Nucleus</keyword>
<keyword id="KW-0597">Phosphoprotein</keyword>
<keyword id="KW-1267">Proteomics identification</keyword>
<keyword id="KW-1185">Reference proteome</keyword>
<protein>
    <recommendedName>
        <fullName evidence="10">PWWP domain-containing DNA repair factor 3A</fullName>
        <shortName evidence="10">PWWP3A</shortName>
    </recommendedName>
    <alternativeName>
        <fullName>Mutated melanoma-associated antigen 1</fullName>
        <shortName>MUM-1</shortName>
    </alternativeName>
    <alternativeName>
        <fullName>PWWP domain-containing protein MUM1</fullName>
    </alternativeName>
    <alternativeName>
        <fullName>Protein expandere</fullName>
    </alternativeName>
</protein>
<evidence type="ECO:0000250" key="1">
    <source>
        <dbReference type="UniProtKB" id="B1H224"/>
    </source>
</evidence>
<evidence type="ECO:0000250" key="2">
    <source>
        <dbReference type="UniProtKB" id="Q6DID5"/>
    </source>
</evidence>
<evidence type="ECO:0000256" key="3">
    <source>
        <dbReference type="SAM" id="MobiDB-lite"/>
    </source>
</evidence>
<evidence type="ECO:0000269" key="4">
    <source>
    </source>
</evidence>
<evidence type="ECO:0000269" key="5">
    <source>
    </source>
</evidence>
<evidence type="ECO:0000269" key="6">
    <source>
    </source>
</evidence>
<evidence type="ECO:0000269" key="7">
    <source>
    </source>
</evidence>
<evidence type="ECO:0000303" key="8">
    <source>
    </source>
</evidence>
<evidence type="ECO:0000303" key="9">
    <source>
    </source>
</evidence>
<evidence type="ECO:0000305" key="10"/>
<evidence type="ECO:0000305" key="11">
    <source>
    </source>
</evidence>
<evidence type="ECO:0000312" key="12">
    <source>
        <dbReference type="HGNC" id="HGNC:29641"/>
    </source>
</evidence>
<evidence type="ECO:0007829" key="13">
    <source>
        <dbReference type="PDB" id="3PMI"/>
    </source>
</evidence>
<sequence>MADAKYVLCRWEKRLWPAKVLARTATSTKNKRRKEYFLAVQILSLEEKIKVKSTEVEILEKSQIEAIASSLASQNEVPAAPLEELAYRRSLRVALDVLSEGSIWSQESSAGTGRADRSLRGKPMEHVSSPCDSNSSSLPRGDVLGSSRPHRRRPCVQQSLSSSFTCEKDPECKVDHKKGLRKSENPRGPLVLPAGGGAQDESGSRIHHKNWTLASKRGGNSAQKASLCLNGSSLSEDDTERDMGSKGGSWAAPSLPSGVREDDPCANAEGHDPGLPLGSLTAPPAPEPSACSEPGECPAKKRPRLDGSQRPPAVQLEPMAAGAAPSPGPGPGPRESVTPRSTARLGPPPSHASADATRCLPCPDSQKLEKECQSSEESMGSNSMRSILEEDEEDEEPPRVLLYHEPRSFEVGMLVWHKHKKYPFWPAVVKSVRQRDKKASVLYIEGHMNPKMKGFTVSLKSLKHFDCKEKQTLLNQAREDFNQDIGWCVSLITDYRVRLGCGSFAGSFLEYYAADISYPVRKSIQQDVLGTKLPQLSKGSPEEPVVGCPLGQRQPCRKMLPDRSRAARDRANQKLVEYIVKAKGAESHLRAILKSRKPSRWLQTFLSSSQYVTCVETYLEDEGQLDLVVKYLQGVYQEVGAKVLQRTNGDRIRFILDVLLPEAIICAISAVDEVDYKTAEEKYIKGPSLSYREKEIFDNQLLEERNRRRR</sequence>
<comment type="function">
    <text evidence="5">Involved in the DNA damage response pathway by contributing to the maintenance of chromatin architecture. Recruited to the vicinity of DNA breaks by TP53BP1 and plays an accessory role to facilitate damage-induced chromatin changes and promoting chromatin relaxation. Required for efficient DNA repair and cell survival following DNA damage.</text>
</comment>
<comment type="subunit">
    <text evidence="5 6">Interacts with TP53BP1 (via BRCT domain); the interaction is not dependent on its phosphorylation status. Binds nucleosomes. Interacts with trimethylated 'Lys-36' of histone H3 (H3K36me3) (in vitro).</text>
</comment>
<comment type="interaction">
    <interactant intactId="EBI-10239402">
        <id>Q2TAK8-2</id>
    </interactant>
    <interactant intactId="EBI-747776">
        <id>Q53EZ4</id>
        <label>CEP55</label>
    </interactant>
    <organismsDiffer>false</organismsDiffer>
    <experiments>3</experiments>
</comment>
<comment type="interaction">
    <interactant intactId="EBI-10239402">
        <id>Q2TAK8-2</id>
    </interactant>
    <interactant intactId="EBI-349832">
        <id>Q9HD26</id>
        <label>GOPC</label>
    </interactant>
    <organismsDiffer>false</organismsDiffer>
    <experiments>3</experiments>
</comment>
<comment type="subcellular location">
    <subcellularLocation>
        <location evidence="5">Nucleus</location>
    </subcellularLocation>
    <text>Recruited to DNA damage sites via its interaction with the BRCT domain of TP53BP1.</text>
</comment>
<comment type="alternative products">
    <event type="alternative splicing"/>
    <isoform>
        <id>Q2TAK8-1</id>
        <name>1</name>
        <sequence type="displayed"/>
    </isoform>
    <isoform>
        <id>Q2TAK8-2</id>
        <name>2</name>
        <sequence type="described" ref="VSP_026684 VSP_026685"/>
    </isoform>
    <isoform>
        <id>Q2TAK8-3</id>
        <name>3</name>
        <sequence type="described" ref="VSP_053986"/>
    </isoform>
</comment>
<comment type="domain">
    <text evidence="5">The PWWP domain mediates the interaction with nucleosomes.</text>
</comment>
<comment type="miscellaneous">
    <text evidence="11">Acts as an antigenic peptide recognized by cytolytic T-lymphocytes in a melanoma.</text>
</comment>
<comment type="similarity">
    <text evidence="10">Belongs to the PWWP3A family.</text>
</comment>
<comment type="sequence caution" evidence="10">
    <conflict type="frameshift">
        <sequence resource="EMBL-CDS" id="AAC50240"/>
    </conflict>
</comment>
<comment type="sequence caution" evidence="10">
    <conflict type="erroneous initiation">
        <sequence resource="EMBL-CDS" id="AAH08098"/>
    </conflict>
    <text>Truncated N-terminus.</text>
</comment>
<comment type="sequence caution" evidence="10">
    <conflict type="erroneous initiation">
        <sequence resource="EMBL-CDS" id="AAI10875"/>
    </conflict>
    <text>Extended N-terminus.</text>
</comment>
<comment type="sequence caution" evidence="10">
    <conflict type="erroneous initiation">
        <sequence resource="EMBL-CDS" id="AAI44139"/>
    </conflict>
    <text>Extended N-terminus.</text>
</comment>
<comment type="sequence caution" evidence="10">
    <conflict type="erroneous initiation">
        <sequence resource="EMBL-CDS" id="BAB55357"/>
    </conflict>
    <text>Truncated N-terminus.</text>
</comment>
<comment type="sequence caution" evidence="10">
    <conflict type="erroneous initiation">
        <sequence resource="EMBL-CDS" id="BAC11493"/>
    </conflict>
    <text>Truncated N-terminus.</text>
</comment>
<organism>
    <name type="scientific">Homo sapiens</name>
    <name type="common">Human</name>
    <dbReference type="NCBI Taxonomy" id="9606"/>
    <lineage>
        <taxon>Eukaryota</taxon>
        <taxon>Metazoa</taxon>
        <taxon>Chordata</taxon>
        <taxon>Craniata</taxon>
        <taxon>Vertebrata</taxon>
        <taxon>Euteleostomi</taxon>
        <taxon>Mammalia</taxon>
        <taxon>Eutheria</taxon>
        <taxon>Euarchontoglires</taxon>
        <taxon>Primates</taxon>
        <taxon>Haplorrhini</taxon>
        <taxon>Catarrhini</taxon>
        <taxon>Hominidae</taxon>
        <taxon>Homo</taxon>
    </lineage>
</organism>
<name>PWP3A_HUMAN</name>
<gene>
    <name evidence="12" type="primary">PWWP3A</name>
    <name evidence="9" type="synonym">EXPAND1</name>
    <name evidence="9" type="synonym">MUM1</name>
</gene>